<comment type="function">
    <text evidence="1">Involved in the biosynthesis of branched-chain amino acids (BCAA). Catalyzes an alkyl-migration followed by a ketol-acid reduction of (S)-2-acetolactate (S2AL) to yield (R)-2,3-dihydroxy-isovalerate. In the isomerase reaction, S2AL is rearranged via a Mg-dependent methyl migration to produce 3-hydroxy-3-methyl-2-ketobutyrate (HMKB). In the reductase reaction, this 2-ketoacid undergoes a metal-dependent reduction by NADPH to yield (R)-2,3-dihydroxy-isovalerate.</text>
</comment>
<comment type="catalytic activity">
    <reaction evidence="1">
        <text>(2R)-2,3-dihydroxy-3-methylbutanoate + NADP(+) = (2S)-2-acetolactate + NADPH + H(+)</text>
        <dbReference type="Rhea" id="RHEA:22068"/>
        <dbReference type="ChEBI" id="CHEBI:15378"/>
        <dbReference type="ChEBI" id="CHEBI:49072"/>
        <dbReference type="ChEBI" id="CHEBI:57783"/>
        <dbReference type="ChEBI" id="CHEBI:58349"/>
        <dbReference type="ChEBI" id="CHEBI:58476"/>
        <dbReference type="EC" id="1.1.1.86"/>
    </reaction>
</comment>
<comment type="catalytic activity">
    <reaction evidence="1">
        <text>(2R,3R)-2,3-dihydroxy-3-methylpentanoate + NADP(+) = (S)-2-ethyl-2-hydroxy-3-oxobutanoate + NADPH + H(+)</text>
        <dbReference type="Rhea" id="RHEA:13493"/>
        <dbReference type="ChEBI" id="CHEBI:15378"/>
        <dbReference type="ChEBI" id="CHEBI:49256"/>
        <dbReference type="ChEBI" id="CHEBI:49258"/>
        <dbReference type="ChEBI" id="CHEBI:57783"/>
        <dbReference type="ChEBI" id="CHEBI:58349"/>
        <dbReference type="EC" id="1.1.1.86"/>
    </reaction>
</comment>
<comment type="cofactor">
    <cofactor evidence="1">
        <name>Mg(2+)</name>
        <dbReference type="ChEBI" id="CHEBI:18420"/>
    </cofactor>
    <text evidence="1">Binds 2 magnesium ions per subunit.</text>
</comment>
<comment type="pathway">
    <text evidence="1">Amino-acid biosynthesis; L-isoleucine biosynthesis; L-isoleucine from 2-oxobutanoate: step 2/4.</text>
</comment>
<comment type="pathway">
    <text evidence="1">Amino-acid biosynthesis; L-valine biosynthesis; L-valine from pyruvate: step 2/4.</text>
</comment>
<comment type="similarity">
    <text evidence="1">Belongs to the ketol-acid reductoisomerase family.</text>
</comment>
<sequence length="339" mass="37144">MRVYYDRDADINLIKGKKVVIIGYGSQGHAHALNLKDSGVKDVAIALRKGSATAQKAEAAGFKVMEVAEAAKWADVMMMLTPDELQGDIYREHLHDNMKQGAALLFAHGLNVHFNLIDPRADLDVLMIAPKGPGHTVRGEYLKGGGVPCLIAIHKDSSGNAHDLGLSYASAVGGGRAGIIETTFREECETDLFGEQVVLCGGLVELIKGGFETLVEAGYAPEMAYFECLHEVKLIVDLIYEGGIANMNYSISNTAEYGEYVTGPRIVTSETKKEMKKVLEDIQNGIFTRNWMLENKVNQTSFKATRAKLAEHQIEEVGAKLREMMPWIKKGALVDKSKN</sequence>
<keyword id="KW-0028">Amino-acid biosynthesis</keyword>
<keyword id="KW-0100">Branched-chain amino acid biosynthesis</keyword>
<keyword id="KW-0460">Magnesium</keyword>
<keyword id="KW-0479">Metal-binding</keyword>
<keyword id="KW-0521">NADP</keyword>
<keyword id="KW-0560">Oxidoreductase</keyword>
<name>ILVC_RHOP5</name>
<evidence type="ECO:0000255" key="1">
    <source>
        <dbReference type="HAMAP-Rule" id="MF_00435"/>
    </source>
</evidence>
<evidence type="ECO:0000255" key="2">
    <source>
        <dbReference type="PROSITE-ProRule" id="PRU01197"/>
    </source>
</evidence>
<evidence type="ECO:0000255" key="3">
    <source>
        <dbReference type="PROSITE-ProRule" id="PRU01198"/>
    </source>
</evidence>
<proteinExistence type="inferred from homology"/>
<accession>Q07PJ7</accession>
<feature type="chain" id="PRO_1000050568" description="Ketol-acid reductoisomerase (NADP(+))">
    <location>
        <begin position="1"/>
        <end position="339"/>
    </location>
</feature>
<feature type="domain" description="KARI N-terminal Rossmann" evidence="2">
    <location>
        <begin position="1"/>
        <end position="182"/>
    </location>
</feature>
<feature type="domain" description="KARI C-terminal knotted" evidence="3">
    <location>
        <begin position="183"/>
        <end position="328"/>
    </location>
</feature>
<feature type="active site" evidence="1">
    <location>
        <position position="108"/>
    </location>
</feature>
<feature type="binding site" evidence="1">
    <location>
        <begin position="24"/>
        <end position="27"/>
    </location>
    <ligand>
        <name>NADP(+)</name>
        <dbReference type="ChEBI" id="CHEBI:58349"/>
    </ligand>
</feature>
<feature type="binding site" evidence="1">
    <location>
        <position position="48"/>
    </location>
    <ligand>
        <name>NADP(+)</name>
        <dbReference type="ChEBI" id="CHEBI:58349"/>
    </ligand>
</feature>
<feature type="binding site" evidence="1">
    <location>
        <position position="51"/>
    </location>
    <ligand>
        <name>NADP(+)</name>
        <dbReference type="ChEBI" id="CHEBI:58349"/>
    </ligand>
</feature>
<feature type="binding site" evidence="1">
    <location>
        <position position="53"/>
    </location>
    <ligand>
        <name>NADP(+)</name>
        <dbReference type="ChEBI" id="CHEBI:58349"/>
    </ligand>
</feature>
<feature type="binding site" evidence="1">
    <location>
        <begin position="83"/>
        <end position="86"/>
    </location>
    <ligand>
        <name>NADP(+)</name>
        <dbReference type="ChEBI" id="CHEBI:58349"/>
    </ligand>
</feature>
<feature type="binding site" evidence="1">
    <location>
        <position position="134"/>
    </location>
    <ligand>
        <name>NADP(+)</name>
        <dbReference type="ChEBI" id="CHEBI:58349"/>
    </ligand>
</feature>
<feature type="binding site" evidence="1">
    <location>
        <position position="191"/>
    </location>
    <ligand>
        <name>Mg(2+)</name>
        <dbReference type="ChEBI" id="CHEBI:18420"/>
        <label>1</label>
    </ligand>
</feature>
<feature type="binding site" evidence="1">
    <location>
        <position position="191"/>
    </location>
    <ligand>
        <name>Mg(2+)</name>
        <dbReference type="ChEBI" id="CHEBI:18420"/>
        <label>2</label>
    </ligand>
</feature>
<feature type="binding site" evidence="1">
    <location>
        <position position="195"/>
    </location>
    <ligand>
        <name>Mg(2+)</name>
        <dbReference type="ChEBI" id="CHEBI:18420"/>
        <label>1</label>
    </ligand>
</feature>
<feature type="binding site" evidence="1">
    <location>
        <position position="227"/>
    </location>
    <ligand>
        <name>Mg(2+)</name>
        <dbReference type="ChEBI" id="CHEBI:18420"/>
        <label>2</label>
    </ligand>
</feature>
<feature type="binding site" evidence="1">
    <location>
        <position position="231"/>
    </location>
    <ligand>
        <name>Mg(2+)</name>
        <dbReference type="ChEBI" id="CHEBI:18420"/>
        <label>2</label>
    </ligand>
</feature>
<feature type="binding site" evidence="1">
    <location>
        <position position="252"/>
    </location>
    <ligand>
        <name>substrate</name>
    </ligand>
</feature>
<protein>
    <recommendedName>
        <fullName evidence="1">Ketol-acid reductoisomerase (NADP(+))</fullName>
        <shortName evidence="1">KARI</shortName>
        <ecNumber evidence="1">1.1.1.86</ecNumber>
    </recommendedName>
    <alternativeName>
        <fullName evidence="1">Acetohydroxy-acid isomeroreductase</fullName>
        <shortName evidence="1">AHIR</shortName>
    </alternativeName>
    <alternativeName>
        <fullName evidence="1">Alpha-keto-beta-hydroxylacyl reductoisomerase</fullName>
    </alternativeName>
    <alternativeName>
        <fullName evidence="1">Ketol-acid reductoisomerase type 1</fullName>
    </alternativeName>
    <alternativeName>
        <fullName evidence="1">Ketol-acid reductoisomerase type I</fullName>
    </alternativeName>
</protein>
<dbReference type="EC" id="1.1.1.86" evidence="1"/>
<dbReference type="EMBL" id="CP000463">
    <property type="protein sequence ID" value="ABJ06137.1"/>
    <property type="molecule type" value="Genomic_DNA"/>
</dbReference>
<dbReference type="SMR" id="Q07PJ7"/>
<dbReference type="STRING" id="316055.RPE_2195"/>
<dbReference type="KEGG" id="rpe:RPE_2195"/>
<dbReference type="eggNOG" id="COG0059">
    <property type="taxonomic scope" value="Bacteria"/>
</dbReference>
<dbReference type="HOGENOM" id="CLU_033821_0_1_5"/>
<dbReference type="OrthoDB" id="9804088at2"/>
<dbReference type="UniPathway" id="UPA00047">
    <property type="reaction ID" value="UER00056"/>
</dbReference>
<dbReference type="UniPathway" id="UPA00049">
    <property type="reaction ID" value="UER00060"/>
</dbReference>
<dbReference type="GO" id="GO:0005829">
    <property type="term" value="C:cytosol"/>
    <property type="evidence" value="ECO:0007669"/>
    <property type="project" value="TreeGrafter"/>
</dbReference>
<dbReference type="GO" id="GO:0004455">
    <property type="term" value="F:ketol-acid reductoisomerase activity"/>
    <property type="evidence" value="ECO:0007669"/>
    <property type="project" value="UniProtKB-UniRule"/>
</dbReference>
<dbReference type="GO" id="GO:0000287">
    <property type="term" value="F:magnesium ion binding"/>
    <property type="evidence" value="ECO:0007669"/>
    <property type="project" value="UniProtKB-UniRule"/>
</dbReference>
<dbReference type="GO" id="GO:0050661">
    <property type="term" value="F:NADP binding"/>
    <property type="evidence" value="ECO:0007669"/>
    <property type="project" value="InterPro"/>
</dbReference>
<dbReference type="GO" id="GO:0009097">
    <property type="term" value="P:isoleucine biosynthetic process"/>
    <property type="evidence" value="ECO:0007669"/>
    <property type="project" value="UniProtKB-UniRule"/>
</dbReference>
<dbReference type="GO" id="GO:0009099">
    <property type="term" value="P:L-valine biosynthetic process"/>
    <property type="evidence" value="ECO:0007669"/>
    <property type="project" value="UniProtKB-UniRule"/>
</dbReference>
<dbReference type="FunFam" id="3.40.50.720:FF:000023">
    <property type="entry name" value="Ketol-acid reductoisomerase (NADP(+))"/>
    <property type="match status" value="1"/>
</dbReference>
<dbReference type="Gene3D" id="6.10.240.10">
    <property type="match status" value="1"/>
</dbReference>
<dbReference type="Gene3D" id="3.40.50.720">
    <property type="entry name" value="NAD(P)-binding Rossmann-like Domain"/>
    <property type="match status" value="1"/>
</dbReference>
<dbReference type="HAMAP" id="MF_00435">
    <property type="entry name" value="IlvC"/>
    <property type="match status" value="1"/>
</dbReference>
<dbReference type="InterPro" id="IPR008927">
    <property type="entry name" value="6-PGluconate_DH-like_C_sf"/>
</dbReference>
<dbReference type="InterPro" id="IPR013023">
    <property type="entry name" value="KARI"/>
</dbReference>
<dbReference type="InterPro" id="IPR000506">
    <property type="entry name" value="KARI_C"/>
</dbReference>
<dbReference type="InterPro" id="IPR013116">
    <property type="entry name" value="KARI_N"/>
</dbReference>
<dbReference type="InterPro" id="IPR014359">
    <property type="entry name" value="KARI_prok"/>
</dbReference>
<dbReference type="InterPro" id="IPR036291">
    <property type="entry name" value="NAD(P)-bd_dom_sf"/>
</dbReference>
<dbReference type="NCBIfam" id="TIGR00465">
    <property type="entry name" value="ilvC"/>
    <property type="match status" value="1"/>
</dbReference>
<dbReference type="NCBIfam" id="NF004017">
    <property type="entry name" value="PRK05479.1"/>
    <property type="match status" value="1"/>
</dbReference>
<dbReference type="NCBIfam" id="NF009940">
    <property type="entry name" value="PRK13403.1"/>
    <property type="match status" value="1"/>
</dbReference>
<dbReference type="PANTHER" id="PTHR21371">
    <property type="entry name" value="KETOL-ACID REDUCTOISOMERASE, MITOCHONDRIAL"/>
    <property type="match status" value="1"/>
</dbReference>
<dbReference type="PANTHER" id="PTHR21371:SF1">
    <property type="entry name" value="KETOL-ACID REDUCTOISOMERASE, MITOCHONDRIAL"/>
    <property type="match status" value="1"/>
</dbReference>
<dbReference type="Pfam" id="PF01450">
    <property type="entry name" value="KARI_C"/>
    <property type="match status" value="1"/>
</dbReference>
<dbReference type="Pfam" id="PF07991">
    <property type="entry name" value="KARI_N"/>
    <property type="match status" value="1"/>
</dbReference>
<dbReference type="PIRSF" id="PIRSF000116">
    <property type="entry name" value="IlvC_gammaproteo"/>
    <property type="match status" value="1"/>
</dbReference>
<dbReference type="SUPFAM" id="SSF48179">
    <property type="entry name" value="6-phosphogluconate dehydrogenase C-terminal domain-like"/>
    <property type="match status" value="1"/>
</dbReference>
<dbReference type="SUPFAM" id="SSF51735">
    <property type="entry name" value="NAD(P)-binding Rossmann-fold domains"/>
    <property type="match status" value="1"/>
</dbReference>
<dbReference type="PROSITE" id="PS51851">
    <property type="entry name" value="KARI_C"/>
    <property type="match status" value="1"/>
</dbReference>
<dbReference type="PROSITE" id="PS51850">
    <property type="entry name" value="KARI_N"/>
    <property type="match status" value="1"/>
</dbReference>
<organism>
    <name type="scientific">Rhodopseudomonas palustris (strain BisA53)</name>
    <dbReference type="NCBI Taxonomy" id="316055"/>
    <lineage>
        <taxon>Bacteria</taxon>
        <taxon>Pseudomonadati</taxon>
        <taxon>Pseudomonadota</taxon>
        <taxon>Alphaproteobacteria</taxon>
        <taxon>Hyphomicrobiales</taxon>
        <taxon>Nitrobacteraceae</taxon>
        <taxon>Rhodopseudomonas</taxon>
    </lineage>
</organism>
<reference key="1">
    <citation type="submission" date="2006-09" db="EMBL/GenBank/DDBJ databases">
        <title>Complete sequence of Rhodopseudomonas palustris BisA53.</title>
        <authorList>
            <consortium name="US DOE Joint Genome Institute"/>
            <person name="Copeland A."/>
            <person name="Lucas S."/>
            <person name="Lapidus A."/>
            <person name="Barry K."/>
            <person name="Detter J.C."/>
            <person name="Glavina del Rio T."/>
            <person name="Hammon N."/>
            <person name="Israni S."/>
            <person name="Dalin E."/>
            <person name="Tice H."/>
            <person name="Pitluck S."/>
            <person name="Chain P."/>
            <person name="Malfatti S."/>
            <person name="Shin M."/>
            <person name="Vergez L."/>
            <person name="Schmutz J."/>
            <person name="Larimer F."/>
            <person name="Land M."/>
            <person name="Hauser L."/>
            <person name="Pelletier D.A."/>
            <person name="Kyrpides N."/>
            <person name="Kim E."/>
            <person name="Harwood C.S."/>
            <person name="Oda Y."/>
            <person name="Richardson P."/>
        </authorList>
    </citation>
    <scope>NUCLEOTIDE SEQUENCE [LARGE SCALE GENOMIC DNA]</scope>
    <source>
        <strain>BisA53</strain>
    </source>
</reference>
<gene>
    <name evidence="1" type="primary">ilvC</name>
    <name type="ordered locus">RPE_2195</name>
</gene>